<proteinExistence type="inferred from homology"/>
<keyword id="KW-0963">Cytoplasm</keyword>
<keyword id="KW-0448">Lipopolysaccharide biosynthesis</keyword>
<keyword id="KW-0548">Nucleotidyltransferase</keyword>
<keyword id="KW-0808">Transferase</keyword>
<organism>
    <name type="scientific">Neisseria meningitidis serogroup C / serotype 2a (strain ATCC 700532 / DSM 15464 / FAM18)</name>
    <dbReference type="NCBI Taxonomy" id="272831"/>
    <lineage>
        <taxon>Bacteria</taxon>
        <taxon>Pseudomonadati</taxon>
        <taxon>Pseudomonadota</taxon>
        <taxon>Betaproteobacteria</taxon>
        <taxon>Neisseriales</taxon>
        <taxon>Neisseriaceae</taxon>
        <taxon>Neisseria</taxon>
    </lineage>
</organism>
<dbReference type="EC" id="2.7.7.38" evidence="1"/>
<dbReference type="EMBL" id="AM421808">
    <property type="protein sequence ID" value="CAM09917.1"/>
    <property type="molecule type" value="Genomic_DNA"/>
</dbReference>
<dbReference type="RefSeq" id="WP_002247999.1">
    <property type="nucleotide sequence ID" value="NC_008767.1"/>
</dbReference>
<dbReference type="SMR" id="A1KST6"/>
<dbReference type="KEGG" id="nmc:NMC0624"/>
<dbReference type="HOGENOM" id="CLU_065038_1_0_4"/>
<dbReference type="UniPathway" id="UPA00030"/>
<dbReference type="UniPathway" id="UPA00358">
    <property type="reaction ID" value="UER00476"/>
</dbReference>
<dbReference type="Proteomes" id="UP000002286">
    <property type="component" value="Chromosome"/>
</dbReference>
<dbReference type="GO" id="GO:0005829">
    <property type="term" value="C:cytosol"/>
    <property type="evidence" value="ECO:0007669"/>
    <property type="project" value="TreeGrafter"/>
</dbReference>
<dbReference type="GO" id="GO:0008690">
    <property type="term" value="F:3-deoxy-manno-octulosonate cytidylyltransferase activity"/>
    <property type="evidence" value="ECO:0007669"/>
    <property type="project" value="UniProtKB-UniRule"/>
</dbReference>
<dbReference type="GO" id="GO:0033468">
    <property type="term" value="P:CMP-keto-3-deoxy-D-manno-octulosonic acid biosynthetic process"/>
    <property type="evidence" value="ECO:0007669"/>
    <property type="project" value="UniProtKB-UniRule"/>
</dbReference>
<dbReference type="GO" id="GO:0009103">
    <property type="term" value="P:lipopolysaccharide biosynthetic process"/>
    <property type="evidence" value="ECO:0007669"/>
    <property type="project" value="UniProtKB-UniRule"/>
</dbReference>
<dbReference type="CDD" id="cd02517">
    <property type="entry name" value="CMP-KDO-Synthetase"/>
    <property type="match status" value="1"/>
</dbReference>
<dbReference type="FunFam" id="3.90.550.10:FF:000011">
    <property type="entry name" value="3-deoxy-manno-octulosonate cytidylyltransferase"/>
    <property type="match status" value="1"/>
</dbReference>
<dbReference type="Gene3D" id="3.90.550.10">
    <property type="entry name" value="Spore Coat Polysaccharide Biosynthesis Protein SpsA, Chain A"/>
    <property type="match status" value="1"/>
</dbReference>
<dbReference type="HAMAP" id="MF_00057">
    <property type="entry name" value="KdsB"/>
    <property type="match status" value="1"/>
</dbReference>
<dbReference type="InterPro" id="IPR003329">
    <property type="entry name" value="Cytidylyl_trans"/>
</dbReference>
<dbReference type="InterPro" id="IPR004528">
    <property type="entry name" value="KdsB"/>
</dbReference>
<dbReference type="InterPro" id="IPR029044">
    <property type="entry name" value="Nucleotide-diphossugar_trans"/>
</dbReference>
<dbReference type="NCBIfam" id="TIGR00466">
    <property type="entry name" value="kdsB"/>
    <property type="match status" value="1"/>
</dbReference>
<dbReference type="NCBIfam" id="NF003952">
    <property type="entry name" value="PRK05450.1-5"/>
    <property type="match status" value="1"/>
</dbReference>
<dbReference type="NCBIfam" id="NF009905">
    <property type="entry name" value="PRK13368.1"/>
    <property type="match status" value="1"/>
</dbReference>
<dbReference type="PANTHER" id="PTHR42866">
    <property type="entry name" value="3-DEOXY-MANNO-OCTULOSONATE CYTIDYLYLTRANSFERASE"/>
    <property type="match status" value="1"/>
</dbReference>
<dbReference type="PANTHER" id="PTHR42866:SF2">
    <property type="entry name" value="3-DEOXY-MANNO-OCTULOSONATE CYTIDYLYLTRANSFERASE, MITOCHONDRIAL"/>
    <property type="match status" value="1"/>
</dbReference>
<dbReference type="Pfam" id="PF02348">
    <property type="entry name" value="CTP_transf_3"/>
    <property type="match status" value="1"/>
</dbReference>
<dbReference type="SUPFAM" id="SSF53448">
    <property type="entry name" value="Nucleotide-diphospho-sugar transferases"/>
    <property type="match status" value="1"/>
</dbReference>
<feature type="chain" id="PRO_0000370106" description="3-deoxy-manno-octulosonate cytidylyltransferase">
    <location>
        <begin position="1"/>
        <end position="253"/>
    </location>
</feature>
<evidence type="ECO:0000255" key="1">
    <source>
        <dbReference type="HAMAP-Rule" id="MF_00057"/>
    </source>
</evidence>
<protein>
    <recommendedName>
        <fullName evidence="1">3-deoxy-manno-octulosonate cytidylyltransferase</fullName>
        <ecNumber evidence="1">2.7.7.38</ecNumber>
    </recommendedName>
    <alternativeName>
        <fullName evidence="1">CMP-2-keto-3-deoxyoctulosonic acid synthase</fullName>
        <shortName evidence="1">CKS</shortName>
        <shortName evidence="1">CMP-KDO synthase</shortName>
    </alternativeName>
</protein>
<sequence length="253" mass="27810">MTEFVVLIPARLDSSRLPGKALADIHGKPMVVRVAEQAAKSKAARVVVATDHPDIQTACQAHGIEVVMTSNRHESGTTRLAEASAALKLPPHLVVVNVQGDEPLIAPELIDRTAEVLVENNVQMATAAHELHDFDELMNPNAVKVVLDKNRNAIYFSRAPIPYPRDAMRAGKREMPSETAVLRHIGIYAYRAGFLQRYAEMSVSPLETIESLEQLRVLWHGYPIAVETAKEAPAAGVDTQEDLDRVRAVFQTV</sequence>
<comment type="function">
    <text evidence="1">Activates KDO (a required 8-carbon sugar) for incorporation into bacterial lipopolysaccharide in Gram-negative bacteria.</text>
</comment>
<comment type="catalytic activity">
    <reaction evidence="1">
        <text>3-deoxy-alpha-D-manno-oct-2-ulosonate + CTP = CMP-3-deoxy-beta-D-manno-octulosonate + diphosphate</text>
        <dbReference type="Rhea" id="RHEA:23448"/>
        <dbReference type="ChEBI" id="CHEBI:33019"/>
        <dbReference type="ChEBI" id="CHEBI:37563"/>
        <dbReference type="ChEBI" id="CHEBI:85986"/>
        <dbReference type="ChEBI" id="CHEBI:85987"/>
        <dbReference type="EC" id="2.7.7.38"/>
    </reaction>
</comment>
<comment type="pathway">
    <text evidence="1">Nucleotide-sugar biosynthesis; CMP-3-deoxy-D-manno-octulosonate biosynthesis; CMP-3-deoxy-D-manno-octulosonate from 3-deoxy-D-manno-octulosonate and CTP: step 1/1.</text>
</comment>
<comment type="pathway">
    <text evidence="1">Bacterial outer membrane biogenesis; lipopolysaccharide biosynthesis.</text>
</comment>
<comment type="subcellular location">
    <subcellularLocation>
        <location evidence="1">Cytoplasm</location>
    </subcellularLocation>
</comment>
<comment type="similarity">
    <text evidence="1">Belongs to the KdsB family.</text>
</comment>
<accession>A1KST6</accession>
<reference key="1">
    <citation type="journal article" date="2007" name="PLoS Genet.">
        <title>Meningococcal genetic variation mechanisms viewed through comparative analysis of serogroup C strain FAM18.</title>
        <authorList>
            <person name="Bentley S.D."/>
            <person name="Vernikos G.S."/>
            <person name="Snyder L.A.S."/>
            <person name="Churcher C."/>
            <person name="Arrowsmith C."/>
            <person name="Chillingworth T."/>
            <person name="Cronin A."/>
            <person name="Davis P.H."/>
            <person name="Holroyd N.E."/>
            <person name="Jagels K."/>
            <person name="Maddison M."/>
            <person name="Moule S."/>
            <person name="Rabbinowitsch E."/>
            <person name="Sharp S."/>
            <person name="Unwin L."/>
            <person name="Whitehead S."/>
            <person name="Quail M.A."/>
            <person name="Achtman M."/>
            <person name="Barrell B.G."/>
            <person name="Saunders N.J."/>
            <person name="Parkhill J."/>
        </authorList>
    </citation>
    <scope>NUCLEOTIDE SEQUENCE [LARGE SCALE GENOMIC DNA]</scope>
    <source>
        <strain>ATCC 700532 / DSM 15464 / FAM18</strain>
    </source>
</reference>
<name>KDSB_NEIMF</name>
<gene>
    <name evidence="1" type="primary">kdsB</name>
    <name type="ordered locus">NMC0624</name>
</gene>